<comment type="function">
    <text evidence="1">NDH-1 shuttles electrons from NADH, via FMN and iron-sulfur (Fe-S) centers, to quinones in the respiratory chain. The immediate electron acceptor for the enzyme in this species is believed to be ubiquinone. Couples the redox reaction to proton translocation (for every two electrons transferred, four hydrogen ions are translocated across the cytoplasmic membrane), and thus conserves the redox energy in a proton gradient.</text>
</comment>
<comment type="catalytic activity">
    <reaction evidence="1">
        <text>a quinone + NADH + 5 H(+)(in) = a quinol + NAD(+) + 4 H(+)(out)</text>
        <dbReference type="Rhea" id="RHEA:57888"/>
        <dbReference type="ChEBI" id="CHEBI:15378"/>
        <dbReference type="ChEBI" id="CHEBI:24646"/>
        <dbReference type="ChEBI" id="CHEBI:57540"/>
        <dbReference type="ChEBI" id="CHEBI:57945"/>
        <dbReference type="ChEBI" id="CHEBI:132124"/>
    </reaction>
</comment>
<comment type="subunit">
    <text evidence="1">NDH-1 is composed of 14 different subunits. Subunits NuoA, H, J, K, L, M, N constitute the membrane sector of the complex.</text>
</comment>
<comment type="subcellular location">
    <subcellularLocation>
        <location evidence="1">Cell inner membrane</location>
        <topology evidence="1">Multi-pass membrane protein</topology>
    </subcellularLocation>
</comment>
<comment type="similarity">
    <text evidence="1">Belongs to the complex I subunit 4L family.</text>
</comment>
<protein>
    <recommendedName>
        <fullName evidence="1">NADH-quinone oxidoreductase subunit K</fullName>
        <ecNumber evidence="1">7.1.1.-</ecNumber>
    </recommendedName>
    <alternativeName>
        <fullName evidence="1">NADH dehydrogenase I subunit K</fullName>
    </alternativeName>
    <alternativeName>
        <fullName evidence="1">NDH-1 subunit K</fullName>
    </alternativeName>
</protein>
<evidence type="ECO:0000255" key="1">
    <source>
        <dbReference type="HAMAP-Rule" id="MF_01456"/>
    </source>
</evidence>
<dbReference type="EC" id="7.1.1.-" evidence="1"/>
<dbReference type="EMBL" id="CP001111">
    <property type="protein sequence ID" value="ACF52521.1"/>
    <property type="molecule type" value="Genomic_DNA"/>
</dbReference>
<dbReference type="RefSeq" id="WP_006381125.1">
    <property type="nucleotide sequence ID" value="NC_011071.1"/>
</dbReference>
<dbReference type="SMR" id="B4SQS6"/>
<dbReference type="STRING" id="391008.Smal_2821"/>
<dbReference type="GeneID" id="97223712"/>
<dbReference type="KEGG" id="smt:Smal_2821"/>
<dbReference type="eggNOG" id="COG0713">
    <property type="taxonomic scope" value="Bacteria"/>
</dbReference>
<dbReference type="HOGENOM" id="CLU_144724_2_0_6"/>
<dbReference type="OrthoDB" id="9801357at2"/>
<dbReference type="Proteomes" id="UP000001867">
    <property type="component" value="Chromosome"/>
</dbReference>
<dbReference type="GO" id="GO:0030964">
    <property type="term" value="C:NADH dehydrogenase complex"/>
    <property type="evidence" value="ECO:0007669"/>
    <property type="project" value="TreeGrafter"/>
</dbReference>
<dbReference type="GO" id="GO:0005886">
    <property type="term" value="C:plasma membrane"/>
    <property type="evidence" value="ECO:0007669"/>
    <property type="project" value="UniProtKB-SubCell"/>
</dbReference>
<dbReference type="GO" id="GO:0050136">
    <property type="term" value="F:NADH:ubiquinone reductase (non-electrogenic) activity"/>
    <property type="evidence" value="ECO:0007669"/>
    <property type="project" value="UniProtKB-UniRule"/>
</dbReference>
<dbReference type="GO" id="GO:0048038">
    <property type="term" value="F:quinone binding"/>
    <property type="evidence" value="ECO:0007669"/>
    <property type="project" value="UniProtKB-KW"/>
</dbReference>
<dbReference type="GO" id="GO:0042773">
    <property type="term" value="P:ATP synthesis coupled electron transport"/>
    <property type="evidence" value="ECO:0007669"/>
    <property type="project" value="InterPro"/>
</dbReference>
<dbReference type="FunFam" id="1.10.287.3510:FF:000001">
    <property type="entry name" value="NADH-quinone oxidoreductase subunit K"/>
    <property type="match status" value="1"/>
</dbReference>
<dbReference type="Gene3D" id="1.10.287.3510">
    <property type="match status" value="1"/>
</dbReference>
<dbReference type="HAMAP" id="MF_01456">
    <property type="entry name" value="NDH1_NuoK"/>
    <property type="match status" value="1"/>
</dbReference>
<dbReference type="InterPro" id="IPR001133">
    <property type="entry name" value="NADH_UbQ_OxRdtase_chain4L/K"/>
</dbReference>
<dbReference type="InterPro" id="IPR039428">
    <property type="entry name" value="NUOK/Mnh_C1-like"/>
</dbReference>
<dbReference type="NCBIfam" id="NF004320">
    <property type="entry name" value="PRK05715.1-2"/>
    <property type="match status" value="1"/>
</dbReference>
<dbReference type="NCBIfam" id="NF004321">
    <property type="entry name" value="PRK05715.1-3"/>
    <property type="match status" value="1"/>
</dbReference>
<dbReference type="NCBIfam" id="NF004323">
    <property type="entry name" value="PRK05715.1-5"/>
    <property type="match status" value="1"/>
</dbReference>
<dbReference type="PANTHER" id="PTHR11434:SF21">
    <property type="entry name" value="NADH DEHYDROGENASE SUBUNIT 4L-RELATED"/>
    <property type="match status" value="1"/>
</dbReference>
<dbReference type="PANTHER" id="PTHR11434">
    <property type="entry name" value="NADH-UBIQUINONE OXIDOREDUCTASE SUBUNIT ND4L"/>
    <property type="match status" value="1"/>
</dbReference>
<dbReference type="Pfam" id="PF00420">
    <property type="entry name" value="Oxidored_q2"/>
    <property type="match status" value="1"/>
</dbReference>
<sequence>MITLGHMLALGAVLFAISLAGIFLNRKNVIVLLMSIELMLLSVNVNFVAFSRQLGDPSGQLFVFFILTVAAAEAAIGLAILVTLFRTRRTINVGEVDSLKG</sequence>
<reference key="1">
    <citation type="submission" date="2008-06" db="EMBL/GenBank/DDBJ databases">
        <title>Complete sequence of Stenotrophomonas maltophilia R551-3.</title>
        <authorList>
            <consortium name="US DOE Joint Genome Institute"/>
            <person name="Lucas S."/>
            <person name="Copeland A."/>
            <person name="Lapidus A."/>
            <person name="Glavina del Rio T."/>
            <person name="Dalin E."/>
            <person name="Tice H."/>
            <person name="Pitluck S."/>
            <person name="Chain P."/>
            <person name="Malfatti S."/>
            <person name="Shin M."/>
            <person name="Vergez L."/>
            <person name="Lang D."/>
            <person name="Schmutz J."/>
            <person name="Larimer F."/>
            <person name="Land M."/>
            <person name="Hauser L."/>
            <person name="Kyrpides N."/>
            <person name="Mikhailova N."/>
            <person name="Taghavi S."/>
            <person name="Monchy S."/>
            <person name="Newman L."/>
            <person name="Vangronsveld J."/>
            <person name="van der Lelie D."/>
            <person name="Richardson P."/>
        </authorList>
    </citation>
    <scope>NUCLEOTIDE SEQUENCE [LARGE SCALE GENOMIC DNA]</scope>
    <source>
        <strain>R551-3</strain>
    </source>
</reference>
<feature type="chain" id="PRO_5000389548" description="NADH-quinone oxidoreductase subunit K">
    <location>
        <begin position="1"/>
        <end position="101"/>
    </location>
</feature>
<feature type="transmembrane region" description="Helical" evidence="1">
    <location>
        <begin position="4"/>
        <end position="24"/>
    </location>
</feature>
<feature type="transmembrane region" description="Helical" evidence="1">
    <location>
        <begin position="30"/>
        <end position="50"/>
    </location>
</feature>
<feature type="transmembrane region" description="Helical" evidence="1">
    <location>
        <begin position="62"/>
        <end position="82"/>
    </location>
</feature>
<proteinExistence type="inferred from homology"/>
<gene>
    <name evidence="1" type="primary">nuoK</name>
    <name type="ordered locus">Smal_2821</name>
</gene>
<name>NUOK_STRM5</name>
<organism>
    <name type="scientific">Stenotrophomonas maltophilia (strain R551-3)</name>
    <dbReference type="NCBI Taxonomy" id="391008"/>
    <lineage>
        <taxon>Bacteria</taxon>
        <taxon>Pseudomonadati</taxon>
        <taxon>Pseudomonadota</taxon>
        <taxon>Gammaproteobacteria</taxon>
        <taxon>Lysobacterales</taxon>
        <taxon>Lysobacteraceae</taxon>
        <taxon>Stenotrophomonas</taxon>
        <taxon>Stenotrophomonas maltophilia group</taxon>
    </lineage>
</organism>
<accession>B4SQS6</accession>
<keyword id="KW-0997">Cell inner membrane</keyword>
<keyword id="KW-1003">Cell membrane</keyword>
<keyword id="KW-0472">Membrane</keyword>
<keyword id="KW-0520">NAD</keyword>
<keyword id="KW-0874">Quinone</keyword>
<keyword id="KW-1278">Translocase</keyword>
<keyword id="KW-0812">Transmembrane</keyword>
<keyword id="KW-1133">Transmembrane helix</keyword>
<keyword id="KW-0813">Transport</keyword>
<keyword id="KW-0830">Ubiquinone</keyword>